<dbReference type="EC" id="3.5.1.18" evidence="1"/>
<dbReference type="EMBL" id="AE017220">
    <property type="protein sequence ID" value="AAX66384.1"/>
    <property type="molecule type" value="Genomic_DNA"/>
</dbReference>
<dbReference type="RefSeq" id="WP_001277823.1">
    <property type="nucleotide sequence ID" value="NC_006905.1"/>
</dbReference>
<dbReference type="SMR" id="Q57LM8"/>
<dbReference type="MEROPS" id="M20.010"/>
<dbReference type="KEGG" id="sec:SCH_2478"/>
<dbReference type="HOGENOM" id="CLU_021802_4_0_6"/>
<dbReference type="UniPathway" id="UPA00034">
    <property type="reaction ID" value="UER00021"/>
</dbReference>
<dbReference type="Proteomes" id="UP000000538">
    <property type="component" value="Chromosome"/>
</dbReference>
<dbReference type="GO" id="GO:0008777">
    <property type="term" value="F:acetylornithine deacetylase activity"/>
    <property type="evidence" value="ECO:0007669"/>
    <property type="project" value="TreeGrafter"/>
</dbReference>
<dbReference type="GO" id="GO:0050897">
    <property type="term" value="F:cobalt ion binding"/>
    <property type="evidence" value="ECO:0007669"/>
    <property type="project" value="UniProtKB-UniRule"/>
</dbReference>
<dbReference type="GO" id="GO:0009014">
    <property type="term" value="F:succinyl-diaminopimelate desuccinylase activity"/>
    <property type="evidence" value="ECO:0007669"/>
    <property type="project" value="UniProtKB-UniRule"/>
</dbReference>
<dbReference type="GO" id="GO:0008270">
    <property type="term" value="F:zinc ion binding"/>
    <property type="evidence" value="ECO:0007669"/>
    <property type="project" value="UniProtKB-UniRule"/>
</dbReference>
<dbReference type="GO" id="GO:0019877">
    <property type="term" value="P:diaminopimelate biosynthetic process"/>
    <property type="evidence" value="ECO:0007669"/>
    <property type="project" value="UniProtKB-UniRule"/>
</dbReference>
<dbReference type="GO" id="GO:0006526">
    <property type="term" value="P:L-arginine biosynthetic process"/>
    <property type="evidence" value="ECO:0007669"/>
    <property type="project" value="TreeGrafter"/>
</dbReference>
<dbReference type="GO" id="GO:0009089">
    <property type="term" value="P:lysine biosynthetic process via diaminopimelate"/>
    <property type="evidence" value="ECO:0007669"/>
    <property type="project" value="UniProtKB-UniRule"/>
</dbReference>
<dbReference type="CDD" id="cd03891">
    <property type="entry name" value="M20_DapE_proteobac"/>
    <property type="match status" value="1"/>
</dbReference>
<dbReference type="FunFam" id="3.30.70.360:FF:000011">
    <property type="entry name" value="Succinyl-diaminopimelate desuccinylase"/>
    <property type="match status" value="1"/>
</dbReference>
<dbReference type="FunFam" id="3.40.630.10:FF:000005">
    <property type="entry name" value="Succinyl-diaminopimelate desuccinylase"/>
    <property type="match status" value="1"/>
</dbReference>
<dbReference type="FunFam" id="3.40.630.10:FF:000010">
    <property type="entry name" value="Succinyl-diaminopimelate desuccinylase"/>
    <property type="match status" value="1"/>
</dbReference>
<dbReference type="Gene3D" id="3.40.630.10">
    <property type="entry name" value="Zn peptidases"/>
    <property type="match status" value="2"/>
</dbReference>
<dbReference type="HAMAP" id="MF_01690">
    <property type="entry name" value="DapE"/>
    <property type="match status" value="1"/>
</dbReference>
<dbReference type="InterPro" id="IPR001261">
    <property type="entry name" value="ArgE/DapE_CS"/>
</dbReference>
<dbReference type="InterPro" id="IPR036264">
    <property type="entry name" value="Bact_exopeptidase_dim_dom"/>
</dbReference>
<dbReference type="InterPro" id="IPR005941">
    <property type="entry name" value="DapE_proteobac"/>
</dbReference>
<dbReference type="InterPro" id="IPR002933">
    <property type="entry name" value="Peptidase_M20"/>
</dbReference>
<dbReference type="InterPro" id="IPR011650">
    <property type="entry name" value="Peptidase_M20_dimer"/>
</dbReference>
<dbReference type="InterPro" id="IPR050072">
    <property type="entry name" value="Peptidase_M20A"/>
</dbReference>
<dbReference type="NCBIfam" id="TIGR01246">
    <property type="entry name" value="dapE_proteo"/>
    <property type="match status" value="1"/>
</dbReference>
<dbReference type="NCBIfam" id="NF009557">
    <property type="entry name" value="PRK13009.1"/>
    <property type="match status" value="1"/>
</dbReference>
<dbReference type="PANTHER" id="PTHR43808">
    <property type="entry name" value="ACETYLORNITHINE DEACETYLASE"/>
    <property type="match status" value="1"/>
</dbReference>
<dbReference type="PANTHER" id="PTHR43808:SF31">
    <property type="entry name" value="N-ACETYL-L-CITRULLINE DEACETYLASE"/>
    <property type="match status" value="1"/>
</dbReference>
<dbReference type="Pfam" id="PF07687">
    <property type="entry name" value="M20_dimer"/>
    <property type="match status" value="1"/>
</dbReference>
<dbReference type="Pfam" id="PF01546">
    <property type="entry name" value="Peptidase_M20"/>
    <property type="match status" value="1"/>
</dbReference>
<dbReference type="SUPFAM" id="SSF55031">
    <property type="entry name" value="Bacterial exopeptidase dimerisation domain"/>
    <property type="match status" value="1"/>
</dbReference>
<dbReference type="SUPFAM" id="SSF53187">
    <property type="entry name" value="Zn-dependent exopeptidases"/>
    <property type="match status" value="1"/>
</dbReference>
<dbReference type="PROSITE" id="PS00758">
    <property type="entry name" value="ARGE_DAPE_CPG2_1"/>
    <property type="match status" value="1"/>
</dbReference>
<dbReference type="PROSITE" id="PS00759">
    <property type="entry name" value="ARGE_DAPE_CPG2_2"/>
    <property type="match status" value="1"/>
</dbReference>
<keyword id="KW-0028">Amino-acid biosynthesis</keyword>
<keyword id="KW-0170">Cobalt</keyword>
<keyword id="KW-0220">Diaminopimelate biosynthesis</keyword>
<keyword id="KW-0378">Hydrolase</keyword>
<keyword id="KW-0457">Lysine biosynthesis</keyword>
<keyword id="KW-0479">Metal-binding</keyword>
<keyword id="KW-0862">Zinc</keyword>
<evidence type="ECO:0000255" key="1">
    <source>
        <dbReference type="HAMAP-Rule" id="MF_01690"/>
    </source>
</evidence>
<proteinExistence type="inferred from homology"/>
<gene>
    <name evidence="1" type="primary">dapE</name>
    <name type="ordered locus">SCH_2478</name>
</gene>
<organism>
    <name type="scientific">Salmonella choleraesuis (strain SC-B67)</name>
    <dbReference type="NCBI Taxonomy" id="321314"/>
    <lineage>
        <taxon>Bacteria</taxon>
        <taxon>Pseudomonadati</taxon>
        <taxon>Pseudomonadota</taxon>
        <taxon>Gammaproteobacteria</taxon>
        <taxon>Enterobacterales</taxon>
        <taxon>Enterobacteriaceae</taxon>
        <taxon>Salmonella</taxon>
    </lineage>
</organism>
<name>DAPE_SALCH</name>
<protein>
    <recommendedName>
        <fullName evidence="1">Succinyl-diaminopimelate desuccinylase</fullName>
        <shortName evidence="1">SDAP desuccinylase</shortName>
        <ecNumber evidence="1">3.5.1.18</ecNumber>
    </recommendedName>
    <alternativeName>
        <fullName evidence="1">N-succinyl-LL-2,6-diaminoheptanedioate amidohydrolase</fullName>
    </alternativeName>
</protein>
<feature type="chain" id="PRO_1000187444" description="Succinyl-diaminopimelate desuccinylase">
    <location>
        <begin position="1"/>
        <end position="375"/>
    </location>
</feature>
<feature type="active site" evidence="1">
    <location>
        <position position="68"/>
    </location>
</feature>
<feature type="active site" description="Proton acceptor" evidence="1">
    <location>
        <position position="133"/>
    </location>
</feature>
<feature type="binding site" evidence="1">
    <location>
        <position position="66"/>
    </location>
    <ligand>
        <name>Zn(2+)</name>
        <dbReference type="ChEBI" id="CHEBI:29105"/>
        <label>1</label>
    </ligand>
</feature>
<feature type="binding site" evidence="1">
    <location>
        <position position="99"/>
    </location>
    <ligand>
        <name>Zn(2+)</name>
        <dbReference type="ChEBI" id="CHEBI:29105"/>
        <label>1</label>
    </ligand>
</feature>
<feature type="binding site" evidence="1">
    <location>
        <position position="99"/>
    </location>
    <ligand>
        <name>Zn(2+)</name>
        <dbReference type="ChEBI" id="CHEBI:29105"/>
        <label>2</label>
    </ligand>
</feature>
<feature type="binding site" evidence="1">
    <location>
        <position position="134"/>
    </location>
    <ligand>
        <name>Zn(2+)</name>
        <dbReference type="ChEBI" id="CHEBI:29105"/>
        <label>2</label>
    </ligand>
</feature>
<feature type="binding site" evidence="1">
    <location>
        <position position="162"/>
    </location>
    <ligand>
        <name>Zn(2+)</name>
        <dbReference type="ChEBI" id="CHEBI:29105"/>
        <label>1</label>
    </ligand>
</feature>
<feature type="binding site" evidence="1">
    <location>
        <position position="348"/>
    </location>
    <ligand>
        <name>Zn(2+)</name>
        <dbReference type="ChEBI" id="CHEBI:29105"/>
        <label>2</label>
    </ligand>
</feature>
<reference key="1">
    <citation type="journal article" date="2005" name="Nucleic Acids Res.">
        <title>The genome sequence of Salmonella enterica serovar Choleraesuis, a highly invasive and resistant zoonotic pathogen.</title>
        <authorList>
            <person name="Chiu C.-H."/>
            <person name="Tang P."/>
            <person name="Chu C."/>
            <person name="Hu S."/>
            <person name="Bao Q."/>
            <person name="Yu J."/>
            <person name="Chou Y.-Y."/>
            <person name="Wang H.-S."/>
            <person name="Lee Y.-S."/>
        </authorList>
    </citation>
    <scope>NUCLEOTIDE SEQUENCE [LARGE SCALE GENOMIC DNA]</scope>
    <source>
        <strain>SC-B67</strain>
    </source>
</reference>
<sequence length="375" mass="41560">MSCPVIELTQQLIRRPSLSPDDAGCQALMIERLRKIGFTIEHMDFGDTQNFWAWRGRGETLAFAGHTDVVPAGDVDRWINPPFEPTIRDGMLFGRGAADMKGSLAAMVVAAERFVAQHPHHRGRLAFLITSDEEASAKNGTVKVVEALMARNERLDYCLVGEPSSTEIVGDVVKNGRRGSLTCNLTIHGVQGHVAYPHLADNPVHRAAPFLNELVAIEWDRGNDFFPATSMQVANIQAGTGSNNVIPGELFVQFNFRFSTELTDEIIKERVHALLEKHQLRYTVDWWLSGQPFLTARGKLVDAVVNAIEHYNEIKPQLLTTGGTSDGRFIARMGAQVVELGPVNATIHKINECVNAADLQLLARMYQRIMEQLVA</sequence>
<accession>Q57LM8</accession>
<comment type="function">
    <text evidence="1">Catalyzes the hydrolysis of N-succinyl-L,L-diaminopimelic acid (SDAP), forming succinate and LL-2,6-diaminopimelate (DAP), an intermediate involved in the bacterial biosynthesis of lysine and meso-diaminopimelic acid, an essential component of bacterial cell walls.</text>
</comment>
<comment type="catalytic activity">
    <reaction evidence="1">
        <text>N-succinyl-(2S,6S)-2,6-diaminopimelate + H2O = (2S,6S)-2,6-diaminopimelate + succinate</text>
        <dbReference type="Rhea" id="RHEA:22608"/>
        <dbReference type="ChEBI" id="CHEBI:15377"/>
        <dbReference type="ChEBI" id="CHEBI:30031"/>
        <dbReference type="ChEBI" id="CHEBI:57609"/>
        <dbReference type="ChEBI" id="CHEBI:58087"/>
        <dbReference type="EC" id="3.5.1.18"/>
    </reaction>
</comment>
<comment type="cofactor">
    <cofactor evidence="1">
        <name>Zn(2+)</name>
        <dbReference type="ChEBI" id="CHEBI:29105"/>
    </cofactor>
    <cofactor evidence="1">
        <name>Co(2+)</name>
        <dbReference type="ChEBI" id="CHEBI:48828"/>
    </cofactor>
    <text evidence="1">Binds 2 Zn(2+) or Co(2+) ions per subunit.</text>
</comment>
<comment type="pathway">
    <text evidence="1">Amino-acid biosynthesis; L-lysine biosynthesis via DAP pathway; LL-2,6-diaminopimelate from (S)-tetrahydrodipicolinate (succinylase route): step 3/3.</text>
</comment>
<comment type="subunit">
    <text evidence="1">Homodimer.</text>
</comment>
<comment type="similarity">
    <text evidence="1">Belongs to the peptidase M20A family. DapE subfamily.</text>
</comment>